<reference key="1">
    <citation type="journal article" date="2002" name="Dev. Cell">
        <title>aph-1 and pen-2 are required for Notch pathway signaling, gamma-secretase cleavage of betaAPP, and presenilin protein accumulation.</title>
        <authorList>
            <person name="Francis R."/>
            <person name="McGrath G."/>
            <person name="Zhang J."/>
            <person name="Ruddy D.A."/>
            <person name="Sym M."/>
            <person name="Apfeld J."/>
            <person name="Nicoll M."/>
            <person name="Maxwell M."/>
            <person name="Hai B."/>
            <person name="Ellis M.C."/>
            <person name="Parks A.L."/>
            <person name="Xu W."/>
            <person name="Li J."/>
            <person name="Gurney M."/>
            <person name="Myers R.L."/>
            <person name="Himes C.S."/>
            <person name="Hiebsch R."/>
            <person name="Ruble C."/>
            <person name="Nye J.S."/>
            <person name="Curtis D."/>
        </authorList>
    </citation>
    <scope>NUCLEOTIDE SEQUENCE [MRNA]</scope>
</reference>
<reference key="2">
    <citation type="submission" date="2005-04" db="EMBL/GenBank/DDBJ databases">
        <authorList>
            <consortium name="NIH - Zebrafish Gene Collection (ZGC) project"/>
        </authorList>
    </citation>
    <scope>NUCLEOTIDE SEQUENCE [LARGE SCALE MRNA]</scope>
    <source>
        <tissue>Olfactory epithelium</tissue>
    </source>
</reference>
<proteinExistence type="inferred from homology"/>
<organism>
    <name type="scientific">Danio rerio</name>
    <name type="common">Zebrafish</name>
    <name type="synonym">Brachydanio rerio</name>
    <dbReference type="NCBI Taxonomy" id="7955"/>
    <lineage>
        <taxon>Eukaryota</taxon>
        <taxon>Metazoa</taxon>
        <taxon>Chordata</taxon>
        <taxon>Craniata</taxon>
        <taxon>Vertebrata</taxon>
        <taxon>Euteleostomi</taxon>
        <taxon>Actinopterygii</taxon>
        <taxon>Neopterygii</taxon>
        <taxon>Teleostei</taxon>
        <taxon>Ostariophysi</taxon>
        <taxon>Cypriniformes</taxon>
        <taxon>Danionidae</taxon>
        <taxon>Danioninae</taxon>
        <taxon>Danio</taxon>
    </lineage>
</organism>
<name>PEN2_DANRE</name>
<evidence type="ECO:0000250" key="1">
    <source>
        <dbReference type="UniProtKB" id="Q9NZ42"/>
    </source>
</evidence>
<evidence type="ECO:0000305" key="2"/>
<gene>
    <name type="primary">psenen</name>
    <name type="synonym">pen2</name>
    <name type="ORF">zgc:109727</name>
</gene>
<accession>Q8JHF0</accession>
<accession>Q568W9</accession>
<keyword id="KW-1003">Cell membrane</keyword>
<keyword id="KW-0256">Endoplasmic reticulum</keyword>
<keyword id="KW-0333">Golgi apparatus</keyword>
<keyword id="KW-0472">Membrane</keyword>
<keyword id="KW-0914">Notch signaling pathway</keyword>
<keyword id="KW-1185">Reference proteome</keyword>
<keyword id="KW-0812">Transmembrane</keyword>
<keyword id="KW-1133">Transmembrane helix</keyword>
<protein>
    <recommendedName>
        <fullName>Gamma-secretase subunit PEN-2</fullName>
    </recommendedName>
    <alternativeName>
        <fullName>Presenilin enhancer protein 2 homolog</fullName>
    </alternativeName>
</protein>
<dbReference type="EMBL" id="AF512427">
    <property type="protein sequence ID" value="AAM88324.1"/>
    <property type="molecule type" value="mRNA"/>
</dbReference>
<dbReference type="EMBL" id="BC092674">
    <property type="protein sequence ID" value="AAH92674.1"/>
    <property type="molecule type" value="mRNA"/>
</dbReference>
<dbReference type="RefSeq" id="NP_991139.1">
    <property type="nucleotide sequence ID" value="NM_205576.1"/>
</dbReference>
<dbReference type="SMR" id="Q8JHF0"/>
<dbReference type="FunCoup" id="Q8JHF0">
    <property type="interactions" value="771"/>
</dbReference>
<dbReference type="STRING" id="7955.ENSDARP00000090230"/>
<dbReference type="PaxDb" id="7955-ENSDARP00000090230"/>
<dbReference type="Ensembl" id="ENSDART00000099456">
    <property type="protein sequence ID" value="ENSDARP00000090230"/>
    <property type="gene ID" value="ENSDARG00000068698"/>
</dbReference>
<dbReference type="Ensembl" id="ENSDART00000186625">
    <property type="protein sequence ID" value="ENSDARP00000153835"/>
    <property type="gene ID" value="ENSDARG00000068698"/>
</dbReference>
<dbReference type="GeneID" id="402810"/>
<dbReference type="KEGG" id="dre:402810"/>
<dbReference type="AGR" id="ZFIN:ZDB-GENE-040218-1"/>
<dbReference type="CTD" id="55851"/>
<dbReference type="ZFIN" id="ZDB-GENE-040218-1">
    <property type="gene designation" value="psenen"/>
</dbReference>
<dbReference type="eggNOG" id="KOG3402">
    <property type="taxonomic scope" value="Eukaryota"/>
</dbReference>
<dbReference type="HOGENOM" id="CLU_124142_2_0_1"/>
<dbReference type="InParanoid" id="Q8JHF0"/>
<dbReference type="OMA" id="KLYLCKW"/>
<dbReference type="OrthoDB" id="524898at2759"/>
<dbReference type="PhylomeDB" id="Q8JHF0"/>
<dbReference type="TreeFam" id="TF313116"/>
<dbReference type="Reactome" id="R-DRE-1251985">
    <property type="pathway name" value="Nuclear signaling by ERBB4"/>
</dbReference>
<dbReference type="Reactome" id="R-DRE-193692">
    <property type="pathway name" value="Regulated proteolysis of p75NTR"/>
</dbReference>
<dbReference type="Reactome" id="R-DRE-3928665">
    <property type="pathway name" value="EPH-ephrin mediated repulsion of cells"/>
</dbReference>
<dbReference type="Reactome" id="R-DRE-9839383">
    <property type="pathway name" value="TGFBR3 PTM regulation"/>
</dbReference>
<dbReference type="PRO" id="PR:Q8JHF0"/>
<dbReference type="Proteomes" id="UP000000437">
    <property type="component" value="Chromosome 15"/>
</dbReference>
<dbReference type="Bgee" id="ENSDARG00000068698">
    <property type="expression patterns" value="Expressed in gastrula and 34 other cell types or tissues"/>
</dbReference>
<dbReference type="GO" id="GO:0005789">
    <property type="term" value="C:endoplasmic reticulum membrane"/>
    <property type="evidence" value="ECO:0007669"/>
    <property type="project" value="UniProtKB-SubCell"/>
</dbReference>
<dbReference type="GO" id="GO:0070765">
    <property type="term" value="C:gamma-secretase complex"/>
    <property type="evidence" value="ECO:0000250"/>
    <property type="project" value="UniProtKB"/>
</dbReference>
<dbReference type="GO" id="GO:0032580">
    <property type="term" value="C:Golgi cisterna membrane"/>
    <property type="evidence" value="ECO:0007669"/>
    <property type="project" value="UniProtKB-SubCell"/>
</dbReference>
<dbReference type="GO" id="GO:0016020">
    <property type="term" value="C:membrane"/>
    <property type="evidence" value="ECO:0000250"/>
    <property type="project" value="UniProtKB"/>
</dbReference>
<dbReference type="GO" id="GO:0042982">
    <property type="term" value="P:amyloid precursor protein metabolic process"/>
    <property type="evidence" value="ECO:0000250"/>
    <property type="project" value="UniProtKB"/>
</dbReference>
<dbReference type="GO" id="GO:0034205">
    <property type="term" value="P:amyloid-beta formation"/>
    <property type="evidence" value="ECO:0000250"/>
    <property type="project" value="UniProtKB"/>
</dbReference>
<dbReference type="GO" id="GO:0048066">
    <property type="term" value="P:developmental pigmentation"/>
    <property type="evidence" value="ECO:0000315"/>
    <property type="project" value="ZFIN"/>
</dbReference>
<dbReference type="GO" id="GO:0097324">
    <property type="term" value="P:melanocyte migration"/>
    <property type="evidence" value="ECO:0000315"/>
    <property type="project" value="ZFIN"/>
</dbReference>
<dbReference type="GO" id="GO:0043066">
    <property type="term" value="P:negative regulation of apoptotic process"/>
    <property type="evidence" value="ECO:0000315"/>
    <property type="project" value="ZFIN"/>
</dbReference>
<dbReference type="GO" id="GO:0043524">
    <property type="term" value="P:negative regulation of neuron apoptotic process"/>
    <property type="evidence" value="ECO:0000315"/>
    <property type="project" value="ZFIN"/>
</dbReference>
<dbReference type="GO" id="GO:0007220">
    <property type="term" value="P:Notch receptor processing"/>
    <property type="evidence" value="ECO:0000318"/>
    <property type="project" value="GO_Central"/>
</dbReference>
<dbReference type="GO" id="GO:0007219">
    <property type="term" value="P:Notch signaling pathway"/>
    <property type="evidence" value="ECO:0007669"/>
    <property type="project" value="UniProtKB-KW"/>
</dbReference>
<dbReference type="InterPro" id="IPR019379">
    <property type="entry name" value="Gamma_Secretase_Asp_P_PEN2"/>
</dbReference>
<dbReference type="PANTHER" id="PTHR16318">
    <property type="entry name" value="GAMMA-SECRETASE SUBUNIT PEN-2"/>
    <property type="match status" value="1"/>
</dbReference>
<dbReference type="PANTHER" id="PTHR16318:SF0">
    <property type="entry name" value="GAMMA-SECRETASE SUBUNIT PEN-2"/>
    <property type="match status" value="1"/>
</dbReference>
<dbReference type="Pfam" id="PF10251">
    <property type="entry name" value="PEN-2"/>
    <property type="match status" value="1"/>
</dbReference>
<comment type="function">
    <text evidence="1">Essential subunit of the gamma-secretase complex, an endoprotease complex that catalyzes the intramembrane cleavage of integral membrane proteins such as Notch receptors and APP (amyloid-beta precursor protein). The gamma-secretase complex plays a role in Notch and Wnt signaling cascades and regulation of downstream processes via its role in processing key regulatory proteins.</text>
</comment>
<comment type="subunit">
    <text evidence="1">The functional gamma-secretase complex is composed of at least four polypeptides: a presenilin homodimer (psen1 or psen2), nicastrin (ncstn), aph1 (aph1a or aph1b) and psenen.</text>
</comment>
<comment type="subcellular location">
    <subcellularLocation>
        <location evidence="1">Endoplasmic reticulum membrane</location>
        <topology evidence="1">Multi-pass membrane protein</topology>
    </subcellularLocation>
    <subcellularLocation>
        <location evidence="1">Golgi apparatus</location>
        <location evidence="1">Golgi stack membrane</location>
        <topology evidence="1">Multi-pass membrane protein</topology>
    </subcellularLocation>
    <subcellularLocation>
        <location evidence="1">Cell membrane</location>
        <topology evidence="1">Multi-pass membrane protein</topology>
    </subcellularLocation>
    <subcellularLocation>
        <location evidence="1">Membrane</location>
        <topology evidence="1">Multi-pass membrane protein</topology>
    </subcellularLocation>
    <text evidence="1">Predominantly located in the endoplasmic reticulum and in the cis-Golgi.</text>
</comment>
<comment type="similarity">
    <text evidence="2">Belongs to the PEN-2 family.</text>
</comment>
<comment type="caution">
    <text evidence="2">3D-structure analysis of the human homolog indicates that the membrane topology differs from the predictions. Contrary to predictions, the N-terminus contains two short helices that dip into the membrane, but do not cross it. The C-terminus contains the single transmembrane helix. This gives rise to a topology where the N-terminus is cytoplasmic and the C-terminus is lumenal.</text>
</comment>
<sequence length="101" mass="11851">MNLERIPNEEKLSLCRRYYLGGFAFLPFLWLVNILWFFKEAFLKPAYTEQPQIKSYVKKSALGLLLWVAVLTTWITVFQHFRAQWGEVGDYLSFTIPLGTA</sequence>
<feature type="chain" id="PRO_0000190902" description="Gamma-secretase subunit PEN-2">
    <location>
        <begin position="1"/>
        <end position="101"/>
    </location>
</feature>
<feature type="topological domain" description="Cytoplasmic" evidence="1">
    <location>
        <begin position="1"/>
        <end position="17"/>
    </location>
</feature>
<feature type="intramembrane region" description="Helical" evidence="1">
    <location>
        <begin position="18"/>
        <end position="36"/>
    </location>
</feature>
<feature type="topological domain" description="Cytoplasmic" evidence="1">
    <location>
        <begin position="37"/>
        <end position="57"/>
    </location>
</feature>
<feature type="transmembrane region" description="Helical" evidence="1">
    <location>
        <begin position="58"/>
        <end position="78"/>
    </location>
</feature>
<feature type="topological domain" description="Lumenal" evidence="1">
    <location>
        <begin position="79"/>
        <end position="101"/>
    </location>
</feature>
<feature type="sequence conflict" description="In Ref. 2; AAH92674." evidence="2" ref="2">
    <original>F</original>
    <variation>L</variation>
    <location>
        <position position="25"/>
    </location>
</feature>